<proteinExistence type="inferred from homology"/>
<protein>
    <recommendedName>
        <fullName evidence="1">4-hydroxy-tetrahydrodipicolinate reductase</fullName>
        <shortName evidence="1">HTPA reductase</shortName>
        <ecNumber evidence="1">1.17.1.8</ecNumber>
    </recommendedName>
</protein>
<name>DAPB_PSYA2</name>
<accession>Q4FVQ6</accession>
<organism>
    <name type="scientific">Psychrobacter arcticus (strain DSM 17307 / VKM B-2377 / 273-4)</name>
    <dbReference type="NCBI Taxonomy" id="259536"/>
    <lineage>
        <taxon>Bacteria</taxon>
        <taxon>Pseudomonadati</taxon>
        <taxon>Pseudomonadota</taxon>
        <taxon>Gammaproteobacteria</taxon>
        <taxon>Moraxellales</taxon>
        <taxon>Moraxellaceae</taxon>
        <taxon>Psychrobacter</taxon>
    </lineage>
</organism>
<comment type="function">
    <text evidence="1">Catalyzes the conversion of 4-hydroxy-tetrahydrodipicolinate (HTPA) to tetrahydrodipicolinate.</text>
</comment>
<comment type="catalytic activity">
    <reaction evidence="1">
        <text>(S)-2,3,4,5-tetrahydrodipicolinate + NAD(+) + H2O = (2S,4S)-4-hydroxy-2,3,4,5-tetrahydrodipicolinate + NADH + H(+)</text>
        <dbReference type="Rhea" id="RHEA:35323"/>
        <dbReference type="ChEBI" id="CHEBI:15377"/>
        <dbReference type="ChEBI" id="CHEBI:15378"/>
        <dbReference type="ChEBI" id="CHEBI:16845"/>
        <dbReference type="ChEBI" id="CHEBI:57540"/>
        <dbReference type="ChEBI" id="CHEBI:57945"/>
        <dbReference type="ChEBI" id="CHEBI:67139"/>
        <dbReference type="EC" id="1.17.1.8"/>
    </reaction>
</comment>
<comment type="catalytic activity">
    <reaction evidence="1">
        <text>(S)-2,3,4,5-tetrahydrodipicolinate + NADP(+) + H2O = (2S,4S)-4-hydroxy-2,3,4,5-tetrahydrodipicolinate + NADPH + H(+)</text>
        <dbReference type="Rhea" id="RHEA:35331"/>
        <dbReference type="ChEBI" id="CHEBI:15377"/>
        <dbReference type="ChEBI" id="CHEBI:15378"/>
        <dbReference type="ChEBI" id="CHEBI:16845"/>
        <dbReference type="ChEBI" id="CHEBI:57783"/>
        <dbReference type="ChEBI" id="CHEBI:58349"/>
        <dbReference type="ChEBI" id="CHEBI:67139"/>
        <dbReference type="EC" id="1.17.1.8"/>
    </reaction>
</comment>
<comment type="pathway">
    <text evidence="1">Amino-acid biosynthesis; L-lysine biosynthesis via DAP pathway; (S)-tetrahydrodipicolinate from L-aspartate: step 4/4.</text>
</comment>
<comment type="subcellular location">
    <subcellularLocation>
        <location evidence="1">Cytoplasm</location>
    </subcellularLocation>
</comment>
<comment type="similarity">
    <text evidence="1">Belongs to the DapB family.</text>
</comment>
<comment type="caution">
    <text evidence="2">Was originally thought to be a dihydrodipicolinate reductase (DHDPR), catalyzing the conversion of dihydrodipicolinate to tetrahydrodipicolinate. However, it was shown in E.coli that the substrate of the enzymatic reaction is not dihydrodipicolinate (DHDP) but in fact (2S,4S)-4-hydroxy-2,3,4,5-tetrahydrodipicolinic acid (HTPA), the product released by the DapA-catalyzed reaction.</text>
</comment>
<evidence type="ECO:0000255" key="1">
    <source>
        <dbReference type="HAMAP-Rule" id="MF_00102"/>
    </source>
</evidence>
<evidence type="ECO:0000305" key="2"/>
<gene>
    <name evidence="1" type="primary">dapB</name>
    <name type="ordered locus">Psyc_0028</name>
</gene>
<sequence length="278" mass="29554">MSQQENKKMINVGVIGAGGRMGRMLIEAIQDNPQTALNAAIERQGSSLVGADAGEVAAIGRLEVQIVDDLKAVINDIDVLIDFSLPAATEQNMQVCAKHNVAMVIGTTGFNEQQEQVLAKASEQVAIVYAGNYSTGVNLSLKLLGMAAKAFGTDADVEIIEAHHKHKIDAPSGTAYMMAEAVAEARGQNLKEVVVYGREGQTGAREAGTIGIHAIRGGEIIGDHTVMFIADGEVVEITHRARARMTFAAGAVRAATWIVQQPVGQYNMQDVLGLNDYI</sequence>
<keyword id="KW-0028">Amino-acid biosynthesis</keyword>
<keyword id="KW-0963">Cytoplasm</keyword>
<keyword id="KW-0220">Diaminopimelate biosynthesis</keyword>
<keyword id="KW-0457">Lysine biosynthesis</keyword>
<keyword id="KW-0520">NAD</keyword>
<keyword id="KW-0521">NADP</keyword>
<keyword id="KW-0560">Oxidoreductase</keyword>
<keyword id="KW-1185">Reference proteome</keyword>
<feature type="chain" id="PRO_0000228378" description="4-hydroxy-tetrahydrodipicolinate reductase">
    <location>
        <begin position="1"/>
        <end position="278"/>
    </location>
</feature>
<feature type="active site" description="Proton donor/acceptor" evidence="1">
    <location>
        <position position="163"/>
    </location>
</feature>
<feature type="active site" description="Proton donor" evidence="1">
    <location>
        <position position="167"/>
    </location>
</feature>
<feature type="binding site" evidence="1">
    <location>
        <begin position="16"/>
        <end position="21"/>
    </location>
    <ligand>
        <name>NAD(+)</name>
        <dbReference type="ChEBI" id="CHEBI:57540"/>
    </ligand>
</feature>
<feature type="binding site" evidence="1">
    <location>
        <position position="42"/>
    </location>
    <ligand>
        <name>NAD(+)</name>
        <dbReference type="ChEBI" id="CHEBI:57540"/>
    </ligand>
</feature>
<feature type="binding site" evidence="1">
    <location>
        <position position="43"/>
    </location>
    <ligand>
        <name>NADP(+)</name>
        <dbReference type="ChEBI" id="CHEBI:58349"/>
    </ligand>
</feature>
<feature type="binding site" evidence="1">
    <location>
        <begin position="106"/>
        <end position="108"/>
    </location>
    <ligand>
        <name>NAD(+)</name>
        <dbReference type="ChEBI" id="CHEBI:57540"/>
    </ligand>
</feature>
<feature type="binding site" evidence="1">
    <location>
        <begin position="130"/>
        <end position="133"/>
    </location>
    <ligand>
        <name>NAD(+)</name>
        <dbReference type="ChEBI" id="CHEBI:57540"/>
    </ligand>
</feature>
<feature type="binding site" evidence="1">
    <location>
        <position position="164"/>
    </location>
    <ligand>
        <name>(S)-2,3,4,5-tetrahydrodipicolinate</name>
        <dbReference type="ChEBI" id="CHEBI:16845"/>
    </ligand>
</feature>
<feature type="binding site" evidence="1">
    <location>
        <begin position="173"/>
        <end position="174"/>
    </location>
    <ligand>
        <name>(S)-2,3,4,5-tetrahydrodipicolinate</name>
        <dbReference type="ChEBI" id="CHEBI:16845"/>
    </ligand>
</feature>
<reference key="1">
    <citation type="journal article" date="2010" name="Appl. Environ. Microbiol.">
        <title>The genome sequence of Psychrobacter arcticus 273-4, a psychroactive Siberian permafrost bacterium, reveals mechanisms for adaptation to low-temperature growth.</title>
        <authorList>
            <person name="Ayala-del-Rio H.L."/>
            <person name="Chain P.S."/>
            <person name="Grzymski J.J."/>
            <person name="Ponder M.A."/>
            <person name="Ivanova N."/>
            <person name="Bergholz P.W."/>
            <person name="Di Bartolo G."/>
            <person name="Hauser L."/>
            <person name="Land M."/>
            <person name="Bakermans C."/>
            <person name="Rodrigues D."/>
            <person name="Klappenbach J."/>
            <person name="Zarka D."/>
            <person name="Larimer F."/>
            <person name="Richardson P."/>
            <person name="Murray A."/>
            <person name="Thomashow M."/>
            <person name="Tiedje J.M."/>
        </authorList>
    </citation>
    <scope>NUCLEOTIDE SEQUENCE [LARGE SCALE GENOMIC DNA]</scope>
    <source>
        <strain>DSM 17307 / VKM B-2377 / 273-4</strain>
    </source>
</reference>
<dbReference type="EC" id="1.17.1.8" evidence="1"/>
<dbReference type="EMBL" id="CP000082">
    <property type="protein sequence ID" value="AAZ17902.1"/>
    <property type="molecule type" value="Genomic_DNA"/>
</dbReference>
<dbReference type="RefSeq" id="WP_011279341.1">
    <property type="nucleotide sequence ID" value="NC_007204.1"/>
</dbReference>
<dbReference type="SMR" id="Q4FVQ6"/>
<dbReference type="STRING" id="259536.Psyc_0028"/>
<dbReference type="KEGG" id="par:Psyc_0028"/>
<dbReference type="eggNOG" id="COG0289">
    <property type="taxonomic scope" value="Bacteria"/>
</dbReference>
<dbReference type="HOGENOM" id="CLU_047479_2_1_6"/>
<dbReference type="OrthoDB" id="9790352at2"/>
<dbReference type="UniPathway" id="UPA00034">
    <property type="reaction ID" value="UER00018"/>
</dbReference>
<dbReference type="Proteomes" id="UP000000546">
    <property type="component" value="Chromosome"/>
</dbReference>
<dbReference type="GO" id="GO:0005829">
    <property type="term" value="C:cytosol"/>
    <property type="evidence" value="ECO:0007669"/>
    <property type="project" value="TreeGrafter"/>
</dbReference>
<dbReference type="GO" id="GO:0008839">
    <property type="term" value="F:4-hydroxy-tetrahydrodipicolinate reductase"/>
    <property type="evidence" value="ECO:0007669"/>
    <property type="project" value="UniProtKB-EC"/>
</dbReference>
<dbReference type="GO" id="GO:0051287">
    <property type="term" value="F:NAD binding"/>
    <property type="evidence" value="ECO:0007669"/>
    <property type="project" value="UniProtKB-UniRule"/>
</dbReference>
<dbReference type="GO" id="GO:0050661">
    <property type="term" value="F:NADP binding"/>
    <property type="evidence" value="ECO:0007669"/>
    <property type="project" value="UniProtKB-UniRule"/>
</dbReference>
<dbReference type="GO" id="GO:0016726">
    <property type="term" value="F:oxidoreductase activity, acting on CH or CH2 groups, NAD or NADP as acceptor"/>
    <property type="evidence" value="ECO:0007669"/>
    <property type="project" value="UniProtKB-UniRule"/>
</dbReference>
<dbReference type="GO" id="GO:0019877">
    <property type="term" value="P:diaminopimelate biosynthetic process"/>
    <property type="evidence" value="ECO:0007669"/>
    <property type="project" value="UniProtKB-UniRule"/>
</dbReference>
<dbReference type="GO" id="GO:0009089">
    <property type="term" value="P:lysine biosynthetic process via diaminopimelate"/>
    <property type="evidence" value="ECO:0007669"/>
    <property type="project" value="UniProtKB-UniRule"/>
</dbReference>
<dbReference type="CDD" id="cd02274">
    <property type="entry name" value="DHDPR_N"/>
    <property type="match status" value="1"/>
</dbReference>
<dbReference type="FunFam" id="3.30.360.10:FF:000004">
    <property type="entry name" value="4-hydroxy-tetrahydrodipicolinate reductase"/>
    <property type="match status" value="1"/>
</dbReference>
<dbReference type="FunFam" id="3.40.50.720:FF:000048">
    <property type="entry name" value="4-hydroxy-tetrahydrodipicolinate reductase"/>
    <property type="match status" value="1"/>
</dbReference>
<dbReference type="Gene3D" id="3.30.360.10">
    <property type="entry name" value="Dihydrodipicolinate Reductase, domain 2"/>
    <property type="match status" value="1"/>
</dbReference>
<dbReference type="Gene3D" id="3.40.50.720">
    <property type="entry name" value="NAD(P)-binding Rossmann-like Domain"/>
    <property type="match status" value="1"/>
</dbReference>
<dbReference type="HAMAP" id="MF_00102">
    <property type="entry name" value="DapB"/>
    <property type="match status" value="1"/>
</dbReference>
<dbReference type="InterPro" id="IPR022663">
    <property type="entry name" value="DapB_C"/>
</dbReference>
<dbReference type="InterPro" id="IPR000846">
    <property type="entry name" value="DapB_N"/>
</dbReference>
<dbReference type="InterPro" id="IPR022664">
    <property type="entry name" value="DapB_N_CS"/>
</dbReference>
<dbReference type="InterPro" id="IPR023940">
    <property type="entry name" value="DHDPR_bac"/>
</dbReference>
<dbReference type="InterPro" id="IPR036291">
    <property type="entry name" value="NAD(P)-bd_dom_sf"/>
</dbReference>
<dbReference type="NCBIfam" id="TIGR00036">
    <property type="entry name" value="dapB"/>
    <property type="match status" value="1"/>
</dbReference>
<dbReference type="PANTHER" id="PTHR20836:SF0">
    <property type="entry name" value="4-HYDROXY-TETRAHYDRODIPICOLINATE REDUCTASE 1, CHLOROPLASTIC-RELATED"/>
    <property type="match status" value="1"/>
</dbReference>
<dbReference type="PANTHER" id="PTHR20836">
    <property type="entry name" value="DIHYDRODIPICOLINATE REDUCTASE"/>
    <property type="match status" value="1"/>
</dbReference>
<dbReference type="Pfam" id="PF05173">
    <property type="entry name" value="DapB_C"/>
    <property type="match status" value="1"/>
</dbReference>
<dbReference type="Pfam" id="PF01113">
    <property type="entry name" value="DapB_N"/>
    <property type="match status" value="1"/>
</dbReference>
<dbReference type="PIRSF" id="PIRSF000161">
    <property type="entry name" value="DHPR"/>
    <property type="match status" value="1"/>
</dbReference>
<dbReference type="SUPFAM" id="SSF55347">
    <property type="entry name" value="Glyceraldehyde-3-phosphate dehydrogenase-like, C-terminal domain"/>
    <property type="match status" value="1"/>
</dbReference>
<dbReference type="SUPFAM" id="SSF51735">
    <property type="entry name" value="NAD(P)-binding Rossmann-fold domains"/>
    <property type="match status" value="1"/>
</dbReference>
<dbReference type="PROSITE" id="PS01298">
    <property type="entry name" value="DAPB"/>
    <property type="match status" value="1"/>
</dbReference>